<gene>
    <name type="primary">cbhB</name>
    <name type="ORF">ACLA_085260</name>
</gene>
<name>CBHB_ASPCL</name>
<keyword id="KW-0119">Carbohydrate metabolism</keyword>
<keyword id="KW-0136">Cellulose degradation</keyword>
<keyword id="KW-1015">Disulfide bond</keyword>
<keyword id="KW-0325">Glycoprotein</keyword>
<keyword id="KW-0326">Glycosidase</keyword>
<keyword id="KW-0378">Hydrolase</keyword>
<keyword id="KW-0624">Polysaccharide degradation</keyword>
<keyword id="KW-1185">Reference proteome</keyword>
<keyword id="KW-0964">Secreted</keyword>
<keyword id="KW-0732">Signal</keyword>
<proteinExistence type="inferred from homology"/>
<protein>
    <recommendedName>
        <fullName>Probable 1,4-beta-D-glucan cellobiohydrolase B</fullName>
        <ecNumber>3.2.1.91</ecNumber>
    </recommendedName>
    <alternativeName>
        <fullName>Beta-glucancellobiohydrolase B</fullName>
    </alternativeName>
    <alternativeName>
        <fullName>Exocellobiohydrolase B</fullName>
    </alternativeName>
    <alternativeName>
        <fullName>Exoglucanase B</fullName>
    </alternativeName>
</protein>
<dbReference type="EC" id="3.2.1.91"/>
<dbReference type="EMBL" id="DS027060">
    <property type="protein sequence ID" value="EAW06831.1"/>
    <property type="molecule type" value="Genomic_DNA"/>
</dbReference>
<dbReference type="RefSeq" id="XP_001268257.1">
    <property type="nucleotide sequence ID" value="XM_001268256.1"/>
</dbReference>
<dbReference type="SMR" id="A1CU44"/>
<dbReference type="STRING" id="344612.A1CU44"/>
<dbReference type="GlyCosmos" id="A1CU44">
    <property type="glycosylation" value="3 sites, No reported glycans"/>
</dbReference>
<dbReference type="EnsemblFungi" id="EAW06831">
    <property type="protein sequence ID" value="EAW06831"/>
    <property type="gene ID" value="ACLA_085260"/>
</dbReference>
<dbReference type="GeneID" id="4699868"/>
<dbReference type="KEGG" id="act:ACLA_085260"/>
<dbReference type="VEuPathDB" id="FungiDB:ACLA_085260"/>
<dbReference type="eggNOG" id="ENOG502QPHV">
    <property type="taxonomic scope" value="Eukaryota"/>
</dbReference>
<dbReference type="HOGENOM" id="CLU_020817_3_2_1"/>
<dbReference type="OMA" id="CGFNGAL"/>
<dbReference type="OrthoDB" id="412382at2759"/>
<dbReference type="Proteomes" id="UP000006701">
    <property type="component" value="Unassembled WGS sequence"/>
</dbReference>
<dbReference type="GO" id="GO:0005576">
    <property type="term" value="C:extracellular region"/>
    <property type="evidence" value="ECO:0007669"/>
    <property type="project" value="UniProtKB-SubCell"/>
</dbReference>
<dbReference type="GO" id="GO:0016162">
    <property type="term" value="F:cellulose 1,4-beta-cellobiosidase activity"/>
    <property type="evidence" value="ECO:0007669"/>
    <property type="project" value="UniProtKB-EC"/>
</dbReference>
<dbReference type="GO" id="GO:0030248">
    <property type="term" value="F:cellulose binding"/>
    <property type="evidence" value="ECO:0007669"/>
    <property type="project" value="InterPro"/>
</dbReference>
<dbReference type="GO" id="GO:0030245">
    <property type="term" value="P:cellulose catabolic process"/>
    <property type="evidence" value="ECO:0007669"/>
    <property type="project" value="UniProtKB-KW"/>
</dbReference>
<dbReference type="CDD" id="cd07999">
    <property type="entry name" value="GH7_CBH_EG"/>
    <property type="match status" value="1"/>
</dbReference>
<dbReference type="FunFam" id="2.70.100.10:FF:000001">
    <property type="entry name" value="Glucanase"/>
    <property type="match status" value="1"/>
</dbReference>
<dbReference type="Gene3D" id="2.70.100.10">
    <property type="entry name" value="Glycoside hydrolase, family 7, domain"/>
    <property type="match status" value="1"/>
</dbReference>
<dbReference type="InterPro" id="IPR035971">
    <property type="entry name" value="CBD_sf"/>
</dbReference>
<dbReference type="InterPro" id="IPR000254">
    <property type="entry name" value="Cellulose-bd_dom_fun"/>
</dbReference>
<dbReference type="InterPro" id="IPR013320">
    <property type="entry name" value="ConA-like_dom_sf"/>
</dbReference>
<dbReference type="InterPro" id="IPR001722">
    <property type="entry name" value="Glyco_hydro_7"/>
</dbReference>
<dbReference type="InterPro" id="IPR037019">
    <property type="entry name" value="Glyco_hydro_7_sf"/>
</dbReference>
<dbReference type="PANTHER" id="PTHR33753">
    <property type="entry name" value="1,4-BETA-D-GLUCAN CELLOBIOHYDROLASE B"/>
    <property type="match status" value="1"/>
</dbReference>
<dbReference type="PANTHER" id="PTHR33753:SF2">
    <property type="entry name" value="GLYCOSIDE HYDROLASE FAMILY 7 PROTEIN"/>
    <property type="match status" value="1"/>
</dbReference>
<dbReference type="Pfam" id="PF00734">
    <property type="entry name" value="CBM_1"/>
    <property type="match status" value="1"/>
</dbReference>
<dbReference type="Pfam" id="PF00840">
    <property type="entry name" value="Glyco_hydro_7"/>
    <property type="match status" value="1"/>
</dbReference>
<dbReference type="PRINTS" id="PR00734">
    <property type="entry name" value="GLHYDRLASE7"/>
</dbReference>
<dbReference type="SMART" id="SM00236">
    <property type="entry name" value="fCBD"/>
    <property type="match status" value="1"/>
</dbReference>
<dbReference type="SUPFAM" id="SSF57180">
    <property type="entry name" value="Cellulose-binding domain"/>
    <property type="match status" value="1"/>
</dbReference>
<dbReference type="SUPFAM" id="SSF49899">
    <property type="entry name" value="Concanavalin A-like lectins/glucanases"/>
    <property type="match status" value="1"/>
</dbReference>
<dbReference type="PROSITE" id="PS00562">
    <property type="entry name" value="CBM1_1"/>
    <property type="match status" value="1"/>
</dbReference>
<dbReference type="PROSITE" id="PS51164">
    <property type="entry name" value="CBM1_2"/>
    <property type="match status" value="1"/>
</dbReference>
<evidence type="ECO:0000250" key="1"/>
<evidence type="ECO:0000255" key="2"/>
<evidence type="ECO:0000255" key="3">
    <source>
        <dbReference type="PROSITE-ProRule" id="PRU00597"/>
    </source>
</evidence>
<evidence type="ECO:0000256" key="4">
    <source>
        <dbReference type="SAM" id="MobiDB-lite"/>
    </source>
</evidence>
<evidence type="ECO:0000305" key="5"/>
<sequence>MLPSTISYRIYKNALFFAALFGAVQAQKVGTSKAEVHPSMAWQTCAADGTCTTKNGKVVIDANWRWVHDVKGYTNCYTGNTWNAELCPDNESCAENCALEGADYAATYGATTSGNALSLKFVTQSQQKNIGSRLYMMKDDNTYETFKLLNQEFTFDVDVSNLPCGLNGALYFVSMDADGGLSRYTGNEAGAKYGTGYCDSQCPRDLKFINGLANVEGWTPSSSDANAGNGGHGSCCAEMDIWEANSISTAYTPHPCDTPGQAMCNGDSCGGTYSSDRYGGTCDPDGCDFNSYRQGNKSFYGPGMTVDTKKKMTVVTQFLTNDGTATGTLSEIKRFYVQDGKVIANSESTWPNLGGNSLTNDFCKAQKTVFGDMDTFSKHGGMEGMGAALAEGMVLVMSLWDDHNSNMLWLDSNSPTTGTSTTPGVARGSCDISSGDPKDLEANHPDASVVYSNIKVGPIGSTFNSGGSNPGGSTTTTKPATSTTTTKATTTATTNTTGPTGTGVAQPWAQCGGIGYSGPTQCAAPYTCTKQNDYYSQCL</sequence>
<organism>
    <name type="scientific">Aspergillus clavatus (strain ATCC 1007 / CBS 513.65 / DSM 816 / NCTC 3887 / NRRL 1 / QM 1276 / 107)</name>
    <dbReference type="NCBI Taxonomy" id="344612"/>
    <lineage>
        <taxon>Eukaryota</taxon>
        <taxon>Fungi</taxon>
        <taxon>Dikarya</taxon>
        <taxon>Ascomycota</taxon>
        <taxon>Pezizomycotina</taxon>
        <taxon>Eurotiomycetes</taxon>
        <taxon>Eurotiomycetidae</taxon>
        <taxon>Eurotiales</taxon>
        <taxon>Aspergillaceae</taxon>
        <taxon>Aspergillus</taxon>
        <taxon>Aspergillus subgen. Fumigati</taxon>
    </lineage>
</organism>
<feature type="signal peptide" evidence="2">
    <location>
        <begin position="1"/>
        <end position="26"/>
    </location>
</feature>
<feature type="chain" id="PRO_0000393546" description="Probable 1,4-beta-D-glucan cellobiohydrolase B">
    <location>
        <begin position="27"/>
        <end position="539"/>
    </location>
</feature>
<feature type="domain" description="CBM1" evidence="3">
    <location>
        <begin position="503"/>
        <end position="539"/>
    </location>
</feature>
<feature type="region of interest" description="Catalytic">
    <location>
        <begin position="27"/>
        <end position="461"/>
    </location>
</feature>
<feature type="region of interest" description="Disordered" evidence="4">
    <location>
        <begin position="462"/>
        <end position="504"/>
    </location>
</feature>
<feature type="region of interest" description="Thr-rich linker">
    <location>
        <begin position="462"/>
        <end position="503"/>
    </location>
</feature>
<feature type="compositionally biased region" description="Low complexity" evidence="4">
    <location>
        <begin position="462"/>
        <end position="503"/>
    </location>
</feature>
<feature type="active site" description="Nucleophile" evidence="1">
    <location>
        <position position="238"/>
    </location>
</feature>
<feature type="active site" description="Proton donor" evidence="1">
    <location>
        <position position="243"/>
    </location>
</feature>
<feature type="glycosylation site" description="N-linked (GlcNAc...) asparagine" evidence="2">
    <location>
        <position position="90"/>
    </location>
</feature>
<feature type="glycosylation site" description="N-linked (GlcNAc...) asparagine" evidence="2">
    <location>
        <position position="296"/>
    </location>
</feature>
<feature type="glycosylation site" description="N-linked (GlcNAc...) asparagine" evidence="2">
    <location>
        <position position="495"/>
    </location>
</feature>
<feature type="disulfide bond" evidence="1">
    <location>
        <begin position="511"/>
        <end position="528"/>
    </location>
</feature>
<feature type="disulfide bond" evidence="1">
    <location>
        <begin position="522"/>
        <end position="538"/>
    </location>
</feature>
<reference key="1">
    <citation type="journal article" date="2008" name="PLoS Genet.">
        <title>Genomic islands in the pathogenic filamentous fungus Aspergillus fumigatus.</title>
        <authorList>
            <person name="Fedorova N.D."/>
            <person name="Khaldi N."/>
            <person name="Joardar V.S."/>
            <person name="Maiti R."/>
            <person name="Amedeo P."/>
            <person name="Anderson M.J."/>
            <person name="Crabtree J."/>
            <person name="Silva J.C."/>
            <person name="Badger J.H."/>
            <person name="Albarraq A."/>
            <person name="Angiuoli S."/>
            <person name="Bussey H."/>
            <person name="Bowyer P."/>
            <person name="Cotty P.J."/>
            <person name="Dyer P.S."/>
            <person name="Egan A."/>
            <person name="Galens K."/>
            <person name="Fraser-Liggett C.M."/>
            <person name="Haas B.J."/>
            <person name="Inman J.M."/>
            <person name="Kent R."/>
            <person name="Lemieux S."/>
            <person name="Malavazi I."/>
            <person name="Orvis J."/>
            <person name="Roemer T."/>
            <person name="Ronning C.M."/>
            <person name="Sundaram J.P."/>
            <person name="Sutton G."/>
            <person name="Turner G."/>
            <person name="Venter J.C."/>
            <person name="White O.R."/>
            <person name="Whitty B.R."/>
            <person name="Youngman P."/>
            <person name="Wolfe K.H."/>
            <person name="Goldman G.H."/>
            <person name="Wortman J.R."/>
            <person name="Jiang B."/>
            <person name="Denning D.W."/>
            <person name="Nierman W.C."/>
        </authorList>
    </citation>
    <scope>NUCLEOTIDE SEQUENCE [LARGE SCALE GENOMIC DNA]</scope>
    <source>
        <strain>ATCC 1007 / CBS 513.65 / DSM 816 / NCTC 3887 / NRRL 1 / QM 1276 / 107</strain>
    </source>
</reference>
<accession>A1CU44</accession>
<comment type="function">
    <text evidence="1">The biological conversion of cellulose to glucose generally requires three types of hydrolytic enzymes: (1) Endoglucanases which cut internal beta-1,4-glucosidic bonds; (2) Exocellobiohydrolases that cut the disaccharide cellobiose from the non-reducing end of the cellulose polymer chain; (3) Beta-1,4-glucosidases which hydrolyze the cellobiose and other short cello-oligosaccharides to glucose.</text>
</comment>
<comment type="catalytic activity">
    <reaction>
        <text>Hydrolysis of (1-&gt;4)-beta-D-glucosidic linkages in cellulose and cellotetraose, releasing cellobiose from the non-reducing ends of the chains.</text>
        <dbReference type="EC" id="3.2.1.91"/>
    </reaction>
</comment>
<comment type="subcellular location">
    <subcellularLocation>
        <location evidence="5">Secreted</location>
    </subcellularLocation>
</comment>
<comment type="similarity">
    <text evidence="5">Belongs to the glycosyl hydrolase 7 (cellulase C) family.</text>
</comment>